<evidence type="ECO:0000255" key="1">
    <source>
        <dbReference type="PROSITE-ProRule" id="PRU00805"/>
    </source>
</evidence>
<evidence type="ECO:0000269" key="2">
    <source>
    </source>
</evidence>
<evidence type="ECO:0000303" key="3">
    <source>
    </source>
</evidence>
<evidence type="ECO:0000305" key="4"/>
<evidence type="ECO:0000305" key="5">
    <source>
    </source>
</evidence>
<name>BUT81_GIBZE</name>
<accession>I1RV21</accession>
<keyword id="KW-0223">Dioxygenase</keyword>
<keyword id="KW-0408">Iron</keyword>
<keyword id="KW-0479">Metal-binding</keyword>
<keyword id="KW-0560">Oxidoreductase</keyword>
<keyword id="KW-1185">Reference proteome</keyword>
<comment type="function">
    <text evidence="2 5">2-oxoglutarate-dependent dioxygenase; part of the gene cluster that mediates the biosynthesis of butenolide, a mycotoxin that shows antibiotic activity but does not seem to play a major role in the spread of head blight in wheat (PubMed:17175185). Butenolide is derived from glutamic acid via a 4-acetamido-2-butenoic acid intermediate (Probable). The predicted function of the NADH:flavin oxidoreductase FG08077, the cytochrome P450 monooxygenase FG08079, the decarboxylase FG08083, and the putative acetyltransferase FG08082 are consistent with this pathway, however, the respective activities of the butelonide biosynthesis cluster enzymes have still to be experimentally determined (Probable).</text>
</comment>
<comment type="cofactor">
    <cofactor evidence="1">
        <name>Fe(2+)</name>
        <dbReference type="ChEBI" id="CHEBI:29033"/>
    </cofactor>
    <text evidence="1">Binds 1 Fe(2+) ion per subunit.</text>
</comment>
<comment type="pathway">
    <text evidence="5">Mycotoxin biosynthesis.</text>
</comment>
<comment type="induction">
    <text evidence="2">Highly expressed under trichothecene-producing conditions.</text>
</comment>
<comment type="similarity">
    <text evidence="4">Belongs to the iron/ascorbate-dependent oxidoreductase family.</text>
</comment>
<protein>
    <recommendedName>
        <fullName evidence="3">2-oxoglutarate-dependent dioxygenase FG08081</fullName>
        <ecNumber evidence="5">1.14.-.-</ecNumber>
    </recommendedName>
    <alternativeName>
        <fullName evidence="3">Butenolide biosynthesis cluster protein FG08081</fullName>
    </alternativeName>
</protein>
<gene>
    <name type="ORF">FG08081</name>
    <name type="ORF">FGRAMPH1_01T09071</name>
</gene>
<feature type="chain" id="PRO_0000450726" description="2-oxoglutarate-dependent dioxygenase FG08081">
    <location>
        <begin position="1"/>
        <end position="332"/>
    </location>
</feature>
<feature type="domain" description="Fe2OG dioxygenase" evidence="1">
    <location>
        <begin position="176"/>
        <end position="280"/>
    </location>
</feature>
<feature type="binding site" evidence="1">
    <location>
        <position position="201"/>
    </location>
    <ligand>
        <name>Fe cation</name>
        <dbReference type="ChEBI" id="CHEBI:24875"/>
    </ligand>
</feature>
<feature type="binding site" evidence="1">
    <location>
        <position position="203"/>
    </location>
    <ligand>
        <name>Fe cation</name>
        <dbReference type="ChEBI" id="CHEBI:24875"/>
    </ligand>
</feature>
<feature type="binding site" evidence="1">
    <location>
        <position position="258"/>
    </location>
    <ligand>
        <name>Fe cation</name>
        <dbReference type="ChEBI" id="CHEBI:24875"/>
    </ligand>
</feature>
<feature type="binding site" evidence="1">
    <location>
        <position position="271"/>
    </location>
    <ligand>
        <name>2-oxoglutarate</name>
        <dbReference type="ChEBI" id="CHEBI:16810"/>
    </ligand>
</feature>
<organism>
    <name type="scientific">Gibberella zeae (strain ATCC MYA-4620 / CBS 123657 / FGSC 9075 / NRRL 31084 / PH-1)</name>
    <name type="common">Wheat head blight fungus</name>
    <name type="synonym">Fusarium graminearum</name>
    <dbReference type="NCBI Taxonomy" id="229533"/>
    <lineage>
        <taxon>Eukaryota</taxon>
        <taxon>Fungi</taxon>
        <taxon>Dikarya</taxon>
        <taxon>Ascomycota</taxon>
        <taxon>Pezizomycotina</taxon>
        <taxon>Sordariomycetes</taxon>
        <taxon>Hypocreomycetidae</taxon>
        <taxon>Hypocreales</taxon>
        <taxon>Nectriaceae</taxon>
        <taxon>Fusarium</taxon>
    </lineage>
</organism>
<sequence length="332" mass="37686">MTASSRPAEYRDVRTANLNTITFDNLFDKDEAELKRLIESCEKDGFFYLDLKSAASQKFWNDLYTIDSTTKDWFKQPIEKKLQTPTVSLAHGFKAVGNQSGSIESKKDGFEALKIGKSELDGRWALPDVVSDNLPLFDQFASSCHFISKLLLDCLSDGLNLKGDARFETHHRDDCRSKSTLYFLHYPPGAQDPNKVGQNMHTDIGTLTILYAPQWGLQVFSPADGAWEYVEPRPNQIIVNVGDTLRFLSGKRFKSALHRVLPLGGIQIEDRYSISYFLRASDSTEFKDSDEDESNAKQWYTKKYAMYEMPHVIQKQQTTLSGGMAQELQATF</sequence>
<proteinExistence type="evidence at transcript level"/>
<reference key="1">
    <citation type="journal article" date="2007" name="Science">
        <title>The Fusarium graminearum genome reveals a link between localized polymorphism and pathogen specialization.</title>
        <authorList>
            <person name="Cuomo C.A."/>
            <person name="Gueldener U."/>
            <person name="Xu J.-R."/>
            <person name="Trail F."/>
            <person name="Turgeon B.G."/>
            <person name="Di Pietro A."/>
            <person name="Walton J.D."/>
            <person name="Ma L.-J."/>
            <person name="Baker S.E."/>
            <person name="Rep M."/>
            <person name="Adam G."/>
            <person name="Antoniw J."/>
            <person name="Baldwin T."/>
            <person name="Calvo S.E."/>
            <person name="Chang Y.-L."/>
            <person name="DeCaprio D."/>
            <person name="Gale L.R."/>
            <person name="Gnerre S."/>
            <person name="Goswami R.S."/>
            <person name="Hammond-Kosack K."/>
            <person name="Harris L.J."/>
            <person name="Hilburn K."/>
            <person name="Kennell J.C."/>
            <person name="Kroken S."/>
            <person name="Magnuson J.K."/>
            <person name="Mannhaupt G."/>
            <person name="Mauceli E.W."/>
            <person name="Mewes H.-W."/>
            <person name="Mitterbauer R."/>
            <person name="Muehlbauer G."/>
            <person name="Muensterkoetter M."/>
            <person name="Nelson D."/>
            <person name="O'Donnell K."/>
            <person name="Ouellet T."/>
            <person name="Qi W."/>
            <person name="Quesneville H."/>
            <person name="Roncero M.I.G."/>
            <person name="Seong K.-Y."/>
            <person name="Tetko I.V."/>
            <person name="Urban M."/>
            <person name="Waalwijk C."/>
            <person name="Ward T.J."/>
            <person name="Yao J."/>
            <person name="Birren B.W."/>
            <person name="Kistler H.C."/>
        </authorList>
    </citation>
    <scope>NUCLEOTIDE SEQUENCE [LARGE SCALE GENOMIC DNA]</scope>
    <source>
        <strain>ATCC MYA-4620 / CBS 123657 / FGSC 9075 / NRRL 31084 / PH-1</strain>
    </source>
</reference>
<reference key="2">
    <citation type="journal article" date="2010" name="Nature">
        <title>Comparative genomics reveals mobile pathogenicity chromosomes in Fusarium.</title>
        <authorList>
            <person name="Ma L.-J."/>
            <person name="van der Does H.C."/>
            <person name="Borkovich K.A."/>
            <person name="Coleman J.J."/>
            <person name="Daboussi M.-J."/>
            <person name="Di Pietro A."/>
            <person name="Dufresne M."/>
            <person name="Freitag M."/>
            <person name="Grabherr M."/>
            <person name="Henrissat B."/>
            <person name="Houterman P.M."/>
            <person name="Kang S."/>
            <person name="Shim W.-B."/>
            <person name="Woloshuk C."/>
            <person name="Xie X."/>
            <person name="Xu J.-R."/>
            <person name="Antoniw J."/>
            <person name="Baker S.E."/>
            <person name="Bluhm B.H."/>
            <person name="Breakspear A."/>
            <person name="Brown D.W."/>
            <person name="Butchko R.A.E."/>
            <person name="Chapman S."/>
            <person name="Coulson R."/>
            <person name="Coutinho P.M."/>
            <person name="Danchin E.G.J."/>
            <person name="Diener A."/>
            <person name="Gale L.R."/>
            <person name="Gardiner D.M."/>
            <person name="Goff S."/>
            <person name="Hammond-Kosack K.E."/>
            <person name="Hilburn K."/>
            <person name="Hua-Van A."/>
            <person name="Jonkers W."/>
            <person name="Kazan K."/>
            <person name="Kodira C.D."/>
            <person name="Koehrsen M."/>
            <person name="Kumar L."/>
            <person name="Lee Y.-H."/>
            <person name="Li L."/>
            <person name="Manners J.M."/>
            <person name="Miranda-Saavedra D."/>
            <person name="Mukherjee M."/>
            <person name="Park G."/>
            <person name="Park J."/>
            <person name="Park S.-Y."/>
            <person name="Proctor R.H."/>
            <person name="Regev A."/>
            <person name="Ruiz-Roldan M.C."/>
            <person name="Sain D."/>
            <person name="Sakthikumar S."/>
            <person name="Sykes S."/>
            <person name="Schwartz D.C."/>
            <person name="Turgeon B.G."/>
            <person name="Wapinski I."/>
            <person name="Yoder O."/>
            <person name="Young S."/>
            <person name="Zeng Q."/>
            <person name="Zhou S."/>
            <person name="Galagan J."/>
            <person name="Cuomo C.A."/>
            <person name="Kistler H.C."/>
            <person name="Rep M."/>
        </authorList>
    </citation>
    <scope>GENOME REANNOTATION</scope>
    <source>
        <strain>ATCC MYA-4620 / CBS 123657 / FGSC 9075 / NRRL 31084 / PH-1</strain>
    </source>
</reference>
<reference key="3">
    <citation type="journal article" date="2015" name="BMC Genomics">
        <title>The completed genome sequence of the pathogenic ascomycete fungus Fusarium graminearum.</title>
        <authorList>
            <person name="King R."/>
            <person name="Urban M."/>
            <person name="Hammond-Kosack M.C.U."/>
            <person name="Hassani-Pak K."/>
            <person name="Hammond-Kosack K.E."/>
        </authorList>
    </citation>
    <scope>NUCLEOTIDE SEQUENCE [LARGE SCALE GENOMIC DNA]</scope>
    <source>
        <strain>ATCC MYA-4620 / CBS 123657 / FGSC 9075 / NRRL 31084 / PH-1</strain>
    </source>
</reference>
<reference key="4">
    <citation type="journal article" date="2007" name="Fungal Genet. Biol.">
        <title>A novel gene cluster in Fusarium graminearum contains a gene that contributes to butenolide synthesis.</title>
        <authorList>
            <person name="Harris L.J."/>
            <person name="Alexander N.J."/>
            <person name="Saparno A."/>
            <person name="Blackwell B."/>
            <person name="McCormick S.P."/>
            <person name="Desjardins A.E."/>
            <person name="Robert L.S."/>
            <person name="Tinker N."/>
            <person name="Hattori J."/>
            <person name="Piche C."/>
            <person name="Schernthaner J.P."/>
            <person name="Watson R."/>
            <person name="Ouellet T."/>
        </authorList>
    </citation>
    <scope>FUNCTION</scope>
    <scope>INDUCTION</scope>
    <scope>PATHWAY</scope>
</reference>
<dbReference type="EC" id="1.14.-.-" evidence="5"/>
<dbReference type="EMBL" id="HG970333">
    <property type="protein sequence ID" value="CEF76338.1"/>
    <property type="molecule type" value="Genomic_DNA"/>
</dbReference>
<dbReference type="RefSeq" id="XP_011320741.1">
    <property type="nucleotide sequence ID" value="XM_011322439.1"/>
</dbReference>
<dbReference type="SMR" id="I1RV21"/>
<dbReference type="STRING" id="229533.I1RV21"/>
<dbReference type="KEGG" id="fgr:FGSG_08081"/>
<dbReference type="VEuPathDB" id="FungiDB:FGRAMPH1_01G09071"/>
<dbReference type="eggNOG" id="KOG0143">
    <property type="taxonomic scope" value="Eukaryota"/>
</dbReference>
<dbReference type="HOGENOM" id="CLU_010119_4_0_1"/>
<dbReference type="InParanoid" id="I1RV21"/>
<dbReference type="OrthoDB" id="41966at110618"/>
<dbReference type="Proteomes" id="UP000070720">
    <property type="component" value="Chromosome 2"/>
</dbReference>
<dbReference type="GO" id="GO:0051213">
    <property type="term" value="F:dioxygenase activity"/>
    <property type="evidence" value="ECO:0007669"/>
    <property type="project" value="UniProtKB-KW"/>
</dbReference>
<dbReference type="GO" id="GO:0046872">
    <property type="term" value="F:metal ion binding"/>
    <property type="evidence" value="ECO:0007669"/>
    <property type="project" value="UniProtKB-KW"/>
</dbReference>
<dbReference type="Gene3D" id="2.60.120.330">
    <property type="entry name" value="B-lactam Antibiotic, Isopenicillin N Synthase, Chain"/>
    <property type="match status" value="1"/>
</dbReference>
<dbReference type="InterPro" id="IPR044861">
    <property type="entry name" value="IPNS-like_FE2OG_OXY"/>
</dbReference>
<dbReference type="InterPro" id="IPR027443">
    <property type="entry name" value="IPNS-like_sf"/>
</dbReference>
<dbReference type="InterPro" id="IPR050231">
    <property type="entry name" value="Iron_ascorbate_oxido_reductase"/>
</dbReference>
<dbReference type="InterPro" id="IPR005123">
    <property type="entry name" value="Oxoglu/Fe-dep_dioxygenase_dom"/>
</dbReference>
<dbReference type="PANTHER" id="PTHR47990">
    <property type="entry name" value="2-OXOGLUTARATE (2OG) AND FE(II)-DEPENDENT OXYGENASE SUPERFAMILY PROTEIN-RELATED"/>
    <property type="match status" value="1"/>
</dbReference>
<dbReference type="Pfam" id="PF03171">
    <property type="entry name" value="2OG-FeII_Oxy"/>
    <property type="match status" value="1"/>
</dbReference>
<dbReference type="SUPFAM" id="SSF51197">
    <property type="entry name" value="Clavaminate synthase-like"/>
    <property type="match status" value="1"/>
</dbReference>
<dbReference type="PROSITE" id="PS51471">
    <property type="entry name" value="FE2OG_OXY"/>
    <property type="match status" value="1"/>
</dbReference>